<keyword id="KW-0021">Allosteric enzyme</keyword>
<keyword id="KW-0067">ATP-binding</keyword>
<keyword id="KW-0418">Kinase</keyword>
<keyword id="KW-0547">Nucleotide-binding</keyword>
<keyword id="KW-1185">Reference proteome</keyword>
<keyword id="KW-0808">Transferase</keyword>
<gene>
    <name evidence="1" type="primary">mcsB</name>
    <name type="ordered locus">BA_0079</name>
    <name type="ordered locus">GBAA_0079</name>
    <name type="ordered locus">BAS0080</name>
</gene>
<comment type="function">
    <text evidence="1">Catalyzes the specific phosphorylation of arginine residues in a large number of proteins. Is part of the bacterial stress response system. Protein arginine phosphorylation has a physiologically important role and is involved in the regulation of many critical cellular processes, such as protein homeostasis, motility, competence, and stringent and stress responses, by regulating gene expression and protein activity.</text>
</comment>
<comment type="catalytic activity">
    <reaction evidence="1">
        <text>L-arginyl-[protein] + ATP = N(omega)-phospho-L-arginyl-[protein] + ADP + H(+)</text>
        <dbReference type="Rhea" id="RHEA:43384"/>
        <dbReference type="Rhea" id="RHEA-COMP:10532"/>
        <dbReference type="Rhea" id="RHEA-COMP:10533"/>
        <dbReference type="ChEBI" id="CHEBI:15378"/>
        <dbReference type="ChEBI" id="CHEBI:29965"/>
        <dbReference type="ChEBI" id="CHEBI:30616"/>
        <dbReference type="ChEBI" id="CHEBI:83226"/>
        <dbReference type="ChEBI" id="CHEBI:456216"/>
        <dbReference type="EC" id="2.7.14.1"/>
    </reaction>
</comment>
<comment type="activity regulation">
    <text evidence="1">Appears to be allosterically activated by the binding of pArg-containing polypeptides to the pArg-binding pocket localized in the C-terminal domain of McsB.</text>
</comment>
<comment type="similarity">
    <text evidence="1">Belongs to the ATP:guanido phosphotransferase family.</text>
</comment>
<organism>
    <name type="scientific">Bacillus anthracis</name>
    <dbReference type="NCBI Taxonomy" id="1392"/>
    <lineage>
        <taxon>Bacteria</taxon>
        <taxon>Bacillati</taxon>
        <taxon>Bacillota</taxon>
        <taxon>Bacilli</taxon>
        <taxon>Bacillales</taxon>
        <taxon>Bacillaceae</taxon>
        <taxon>Bacillus</taxon>
        <taxon>Bacillus cereus group</taxon>
    </lineage>
</organism>
<feature type="chain" id="PRO_0000212011" description="Protein-arginine kinase">
    <location>
        <begin position="1"/>
        <end position="354"/>
    </location>
</feature>
<feature type="domain" description="Phosphagen kinase C-terminal" evidence="1">
    <location>
        <begin position="24"/>
        <end position="254"/>
    </location>
</feature>
<feature type="short sequence motif" description="RDXXRA motif of the pArg binding pocket involved in allosteric regulation" evidence="1">
    <location>
        <begin position="337"/>
        <end position="342"/>
    </location>
</feature>
<feature type="binding site" evidence="1">
    <location>
        <begin position="27"/>
        <end position="31"/>
    </location>
    <ligand>
        <name>ATP</name>
        <dbReference type="ChEBI" id="CHEBI:30616"/>
    </ligand>
</feature>
<feature type="binding site" evidence="1">
    <location>
        <position position="92"/>
    </location>
    <ligand>
        <name>ATP</name>
        <dbReference type="ChEBI" id="CHEBI:30616"/>
    </ligand>
</feature>
<feature type="binding site" evidence="1">
    <location>
        <position position="125"/>
    </location>
    <ligand>
        <name>ATP</name>
        <dbReference type="ChEBI" id="CHEBI:30616"/>
    </ligand>
</feature>
<feature type="binding site" evidence="1">
    <location>
        <begin position="176"/>
        <end position="180"/>
    </location>
    <ligand>
        <name>ATP</name>
        <dbReference type="ChEBI" id="CHEBI:30616"/>
    </ligand>
</feature>
<feature type="binding site" evidence="1">
    <location>
        <begin position="207"/>
        <end position="212"/>
    </location>
    <ligand>
        <name>ATP</name>
        <dbReference type="ChEBI" id="CHEBI:30616"/>
    </ligand>
</feature>
<sequence length="354" mass="40035">MSLDKIMNEAISPWMKGDGPDSDIVLSSRIRLARNFKKYQFSTMQNEEETKQIQELFKKEFINKTVEPFGEFELLKMNELTPLQRRVLVEKHLISPNLAGTEYGACLLSESEHISVMLNEEDHIRIQCLFSGLQLSEALQSANQIDNWIEKEVEYAFDESLGYITSCPTNVGTGLRASVMIHLPGLVLTKRISRIIQVIQKLGLVVRGIYGEGSEALGNIFQVSNQMTLGKSEEDIIADLKSVIQQIIQQEKMARELIVQNSSIELEDKVYRSYGILANSRLIQSAEAANCLSDLRLGIDLGYIQGISRNILTELMVLTQPGILQQYAGGPLGPEERDYRRATLIRERLRIEKN</sequence>
<name>MCSB_BACAN</name>
<evidence type="ECO:0000255" key="1">
    <source>
        <dbReference type="HAMAP-Rule" id="MF_00602"/>
    </source>
</evidence>
<protein>
    <recommendedName>
        <fullName evidence="1">Protein-arginine kinase</fullName>
        <ecNumber evidence="1">2.7.14.1</ecNumber>
    </recommendedName>
</protein>
<dbReference type="EC" id="2.7.14.1" evidence="1"/>
<dbReference type="EMBL" id="AE016879">
    <property type="protein sequence ID" value="AAP24134.1"/>
    <property type="molecule type" value="Genomic_DNA"/>
</dbReference>
<dbReference type="EMBL" id="AE017334">
    <property type="protein sequence ID" value="AAT29159.1"/>
    <property type="molecule type" value="Genomic_DNA"/>
</dbReference>
<dbReference type="EMBL" id="AE017225">
    <property type="protein sequence ID" value="AAT52417.1"/>
    <property type="molecule type" value="Genomic_DNA"/>
</dbReference>
<dbReference type="RefSeq" id="NP_842648.1">
    <property type="nucleotide sequence ID" value="NC_003997.3"/>
</dbReference>
<dbReference type="RefSeq" id="WP_000050832.1">
    <property type="nucleotide sequence ID" value="NZ_WXXJ01000051.1"/>
</dbReference>
<dbReference type="RefSeq" id="YP_026366.1">
    <property type="nucleotide sequence ID" value="NC_005945.1"/>
</dbReference>
<dbReference type="SMR" id="Q81VW0"/>
<dbReference type="STRING" id="261594.GBAA_0079"/>
<dbReference type="DNASU" id="1087194"/>
<dbReference type="GeneID" id="45020125"/>
<dbReference type="KEGG" id="ban:BA_0079"/>
<dbReference type="KEGG" id="bar:GBAA_0079"/>
<dbReference type="KEGG" id="bat:BAS0080"/>
<dbReference type="PATRIC" id="fig|198094.11.peg.77"/>
<dbReference type="eggNOG" id="COG3869">
    <property type="taxonomic scope" value="Bacteria"/>
</dbReference>
<dbReference type="HOGENOM" id="CLU_066591_1_0_9"/>
<dbReference type="OMA" id="WGYLTSC"/>
<dbReference type="OrthoDB" id="9791353at2"/>
<dbReference type="Proteomes" id="UP000000427">
    <property type="component" value="Chromosome"/>
</dbReference>
<dbReference type="Proteomes" id="UP000000594">
    <property type="component" value="Chromosome"/>
</dbReference>
<dbReference type="GO" id="GO:0005615">
    <property type="term" value="C:extracellular space"/>
    <property type="evidence" value="ECO:0007669"/>
    <property type="project" value="TreeGrafter"/>
</dbReference>
<dbReference type="GO" id="GO:0005524">
    <property type="term" value="F:ATP binding"/>
    <property type="evidence" value="ECO:0007669"/>
    <property type="project" value="UniProtKB-KW"/>
</dbReference>
<dbReference type="GO" id="GO:0004111">
    <property type="term" value="F:creatine kinase activity"/>
    <property type="evidence" value="ECO:0007669"/>
    <property type="project" value="InterPro"/>
</dbReference>
<dbReference type="GO" id="GO:0004672">
    <property type="term" value="F:protein kinase activity"/>
    <property type="evidence" value="ECO:0007669"/>
    <property type="project" value="UniProtKB-UniRule"/>
</dbReference>
<dbReference type="GO" id="GO:0046314">
    <property type="term" value="P:phosphocreatine biosynthetic process"/>
    <property type="evidence" value="ECO:0007669"/>
    <property type="project" value="InterPro"/>
</dbReference>
<dbReference type="CDD" id="cd07930">
    <property type="entry name" value="bacterial_phosphagen_kinase"/>
    <property type="match status" value="1"/>
</dbReference>
<dbReference type="FunFam" id="3.30.590.10:FF:000007">
    <property type="entry name" value="Protein-arginine kinase"/>
    <property type="match status" value="1"/>
</dbReference>
<dbReference type="Gene3D" id="3.30.590.10">
    <property type="entry name" value="Glutamine synthetase/guanido kinase, catalytic domain"/>
    <property type="match status" value="1"/>
</dbReference>
<dbReference type="HAMAP" id="MF_00602">
    <property type="entry name" value="Prot_Arg_kinase"/>
    <property type="match status" value="1"/>
</dbReference>
<dbReference type="InterPro" id="IPR023660">
    <property type="entry name" value="Arg_Kinase"/>
</dbReference>
<dbReference type="InterPro" id="IPR000749">
    <property type="entry name" value="ATP-guanido_PTrfase"/>
</dbReference>
<dbReference type="InterPro" id="IPR022415">
    <property type="entry name" value="ATP-guanido_PTrfase_AS"/>
</dbReference>
<dbReference type="InterPro" id="IPR022414">
    <property type="entry name" value="ATP-guanido_PTrfase_cat"/>
</dbReference>
<dbReference type="InterPro" id="IPR014746">
    <property type="entry name" value="Gln_synth/guanido_kin_cat_dom"/>
</dbReference>
<dbReference type="NCBIfam" id="NF002194">
    <property type="entry name" value="PRK01059.1-4"/>
    <property type="match status" value="1"/>
</dbReference>
<dbReference type="NCBIfam" id="NF002195">
    <property type="entry name" value="PRK01059.1-5"/>
    <property type="match status" value="1"/>
</dbReference>
<dbReference type="PANTHER" id="PTHR11547:SF38">
    <property type="entry name" value="ARGININE KINASE 1-RELATED"/>
    <property type="match status" value="1"/>
</dbReference>
<dbReference type="PANTHER" id="PTHR11547">
    <property type="entry name" value="ARGININE OR CREATINE KINASE"/>
    <property type="match status" value="1"/>
</dbReference>
<dbReference type="Pfam" id="PF00217">
    <property type="entry name" value="ATP-gua_Ptrans"/>
    <property type="match status" value="1"/>
</dbReference>
<dbReference type="SUPFAM" id="SSF55931">
    <property type="entry name" value="Glutamine synthetase/guanido kinase"/>
    <property type="match status" value="1"/>
</dbReference>
<dbReference type="PROSITE" id="PS00112">
    <property type="entry name" value="PHOSPHAGEN_KINASE"/>
    <property type="match status" value="1"/>
</dbReference>
<dbReference type="PROSITE" id="PS51510">
    <property type="entry name" value="PHOSPHAGEN_KINASE_C"/>
    <property type="match status" value="1"/>
</dbReference>
<reference key="1">
    <citation type="journal article" date="2003" name="Nature">
        <title>The genome sequence of Bacillus anthracis Ames and comparison to closely related bacteria.</title>
        <authorList>
            <person name="Read T.D."/>
            <person name="Peterson S.N."/>
            <person name="Tourasse N.J."/>
            <person name="Baillie L.W."/>
            <person name="Paulsen I.T."/>
            <person name="Nelson K.E."/>
            <person name="Tettelin H."/>
            <person name="Fouts D.E."/>
            <person name="Eisen J.A."/>
            <person name="Gill S.R."/>
            <person name="Holtzapple E.K."/>
            <person name="Okstad O.A."/>
            <person name="Helgason E."/>
            <person name="Rilstone J."/>
            <person name="Wu M."/>
            <person name="Kolonay J.F."/>
            <person name="Beanan M.J."/>
            <person name="Dodson R.J."/>
            <person name="Brinkac L.M."/>
            <person name="Gwinn M.L."/>
            <person name="DeBoy R.T."/>
            <person name="Madpu R."/>
            <person name="Daugherty S.C."/>
            <person name="Durkin A.S."/>
            <person name="Haft D.H."/>
            <person name="Nelson W.C."/>
            <person name="Peterson J.D."/>
            <person name="Pop M."/>
            <person name="Khouri H.M."/>
            <person name="Radune D."/>
            <person name="Benton J.L."/>
            <person name="Mahamoud Y."/>
            <person name="Jiang L."/>
            <person name="Hance I.R."/>
            <person name="Weidman J.F."/>
            <person name="Berry K.J."/>
            <person name="Plaut R.D."/>
            <person name="Wolf A.M."/>
            <person name="Watkins K.L."/>
            <person name="Nierman W.C."/>
            <person name="Hazen A."/>
            <person name="Cline R.T."/>
            <person name="Redmond C."/>
            <person name="Thwaite J.E."/>
            <person name="White O."/>
            <person name="Salzberg S.L."/>
            <person name="Thomason B."/>
            <person name="Friedlander A.M."/>
            <person name="Koehler T.M."/>
            <person name="Hanna P.C."/>
            <person name="Kolstoe A.-B."/>
            <person name="Fraser C.M."/>
        </authorList>
    </citation>
    <scope>NUCLEOTIDE SEQUENCE [LARGE SCALE GENOMIC DNA]</scope>
    <source>
        <strain>Ames / isolate Porton</strain>
    </source>
</reference>
<reference key="2">
    <citation type="journal article" date="2009" name="J. Bacteriol.">
        <title>The complete genome sequence of Bacillus anthracis Ames 'Ancestor'.</title>
        <authorList>
            <person name="Ravel J."/>
            <person name="Jiang L."/>
            <person name="Stanley S.T."/>
            <person name="Wilson M.R."/>
            <person name="Decker R.S."/>
            <person name="Read T.D."/>
            <person name="Worsham P."/>
            <person name="Keim P.S."/>
            <person name="Salzberg S.L."/>
            <person name="Fraser-Liggett C.M."/>
            <person name="Rasko D.A."/>
        </authorList>
    </citation>
    <scope>NUCLEOTIDE SEQUENCE [LARGE SCALE GENOMIC DNA]</scope>
    <source>
        <strain>Ames ancestor</strain>
    </source>
</reference>
<reference key="3">
    <citation type="submission" date="2004-01" db="EMBL/GenBank/DDBJ databases">
        <title>Complete genome sequence of Bacillus anthracis Sterne.</title>
        <authorList>
            <person name="Brettin T.S."/>
            <person name="Bruce D."/>
            <person name="Challacombe J.F."/>
            <person name="Gilna P."/>
            <person name="Han C."/>
            <person name="Hill K."/>
            <person name="Hitchcock P."/>
            <person name="Jackson P."/>
            <person name="Keim P."/>
            <person name="Longmire J."/>
            <person name="Lucas S."/>
            <person name="Okinaka R."/>
            <person name="Richardson P."/>
            <person name="Rubin E."/>
            <person name="Tice H."/>
        </authorList>
    </citation>
    <scope>NUCLEOTIDE SEQUENCE [LARGE SCALE GENOMIC DNA]</scope>
    <source>
        <strain>Sterne</strain>
    </source>
</reference>
<accession>Q81VW0</accession>
<accession>Q6I4W4</accession>
<accession>Q6KYK8</accession>
<proteinExistence type="inferred from homology"/>